<organism>
    <name type="scientific">Danio rerio</name>
    <name type="common">Zebrafish</name>
    <name type="synonym">Brachydanio rerio</name>
    <dbReference type="NCBI Taxonomy" id="7955"/>
    <lineage>
        <taxon>Eukaryota</taxon>
        <taxon>Metazoa</taxon>
        <taxon>Chordata</taxon>
        <taxon>Craniata</taxon>
        <taxon>Vertebrata</taxon>
        <taxon>Euteleostomi</taxon>
        <taxon>Actinopterygii</taxon>
        <taxon>Neopterygii</taxon>
        <taxon>Teleostei</taxon>
        <taxon>Ostariophysi</taxon>
        <taxon>Cypriniformes</taxon>
        <taxon>Danionidae</taxon>
        <taxon>Danioninae</taxon>
        <taxon>Danio</taxon>
    </lineage>
</organism>
<evidence type="ECO:0000250" key="1"/>
<evidence type="ECO:0000255" key="2">
    <source>
        <dbReference type="PROSITE-ProRule" id="PRU00108"/>
    </source>
</evidence>
<evidence type="ECO:0000256" key="3">
    <source>
        <dbReference type="SAM" id="MobiDB-lite"/>
    </source>
</evidence>
<evidence type="ECO:0000269" key="4">
    <source>
    </source>
</evidence>
<evidence type="ECO:0000269" key="5">
    <source>
    </source>
</evidence>
<evidence type="ECO:0000305" key="6"/>
<keyword id="KW-0217">Developmental protein</keyword>
<keyword id="KW-0238">DNA-binding</keyword>
<keyword id="KW-0371">Homeobox</keyword>
<keyword id="KW-0539">Nucleus</keyword>
<keyword id="KW-1185">Reference proteome</keyword>
<keyword id="KW-0804">Transcription</keyword>
<keyword id="KW-0805">Transcription regulation</keyword>
<dbReference type="EMBL" id="AF071246">
    <property type="protein sequence ID" value="AAD15939.1"/>
    <property type="molecule type" value="Genomic_DNA"/>
</dbReference>
<dbReference type="EMBL" id="CR382300">
    <property type="protein sequence ID" value="CAK10850.1"/>
    <property type="molecule type" value="Genomic_DNA"/>
</dbReference>
<dbReference type="EMBL" id="BC122457">
    <property type="protein sequence ID" value="AAI22458.1"/>
    <property type="molecule type" value="mRNA"/>
</dbReference>
<dbReference type="EMBL" id="DQ060533">
    <property type="protein sequence ID" value="AAY67911.1"/>
    <property type="molecule type" value="mRNA"/>
</dbReference>
<dbReference type="EMBL" id="M76382">
    <property type="protein sequence ID" value="AAA50034.1"/>
    <property type="molecule type" value="Genomic_DNA"/>
</dbReference>
<dbReference type="EMBL" id="Y13947">
    <property type="protein sequence ID" value="CAA74285.1"/>
    <property type="molecule type" value="mRNA"/>
</dbReference>
<dbReference type="PIR" id="S34415">
    <property type="entry name" value="S34415"/>
</dbReference>
<dbReference type="RefSeq" id="NP_571610.1">
    <property type="nucleotide sequence ID" value="NM_131535.1"/>
</dbReference>
<dbReference type="SMR" id="Q9PWL5"/>
<dbReference type="FunCoup" id="Q9PWL5">
    <property type="interactions" value="18"/>
</dbReference>
<dbReference type="Ensembl" id="ENSDART00000169074">
    <property type="protein sequence ID" value="ENSDARP00000134767"/>
    <property type="gene ID" value="ENSDARG00000103862"/>
</dbReference>
<dbReference type="GeneID" id="58050"/>
<dbReference type="KEGG" id="dre:58050"/>
<dbReference type="AGR" id="ZFIN:ZDB-GENE-000823-4"/>
<dbReference type="CTD" id="58050"/>
<dbReference type="ZFIN" id="ZDB-GENE-000823-4">
    <property type="gene designation" value="hoxa4a"/>
</dbReference>
<dbReference type="HOGENOM" id="CLU_061398_0_0_1"/>
<dbReference type="InParanoid" id="Q9PWL5"/>
<dbReference type="OrthoDB" id="6159439at2759"/>
<dbReference type="PhylomeDB" id="Q9PWL5"/>
<dbReference type="TreeFam" id="TF352857"/>
<dbReference type="PRO" id="PR:Q9PWL5"/>
<dbReference type="Proteomes" id="UP000000437">
    <property type="component" value="Chromosome 19"/>
</dbReference>
<dbReference type="Bgee" id="ENSDARG00000103862">
    <property type="expression patterns" value="Expressed in pharyngeal gill and 49 other cell types or tissues"/>
</dbReference>
<dbReference type="ExpressionAtlas" id="Q9PWL5">
    <property type="expression patterns" value="baseline and differential"/>
</dbReference>
<dbReference type="GO" id="GO:0005654">
    <property type="term" value="C:nucleoplasm"/>
    <property type="evidence" value="ECO:0000318"/>
    <property type="project" value="GO_Central"/>
</dbReference>
<dbReference type="GO" id="GO:0000981">
    <property type="term" value="F:DNA-binding transcription factor activity, RNA polymerase II-specific"/>
    <property type="evidence" value="ECO:0000318"/>
    <property type="project" value="GO_Central"/>
</dbReference>
<dbReference type="GO" id="GO:0000978">
    <property type="term" value="F:RNA polymerase II cis-regulatory region sequence-specific DNA binding"/>
    <property type="evidence" value="ECO:0000318"/>
    <property type="project" value="GO_Central"/>
</dbReference>
<dbReference type="GO" id="GO:0009952">
    <property type="term" value="P:anterior/posterior pattern specification"/>
    <property type="evidence" value="ECO:0000318"/>
    <property type="project" value="GO_Central"/>
</dbReference>
<dbReference type="GO" id="GO:0048704">
    <property type="term" value="P:embryonic skeletal system morphogenesis"/>
    <property type="evidence" value="ECO:0000318"/>
    <property type="project" value="GO_Central"/>
</dbReference>
<dbReference type="GO" id="GO:0045944">
    <property type="term" value="P:positive regulation of transcription by RNA polymerase II"/>
    <property type="evidence" value="ECO:0000318"/>
    <property type="project" value="GO_Central"/>
</dbReference>
<dbReference type="CDD" id="cd00086">
    <property type="entry name" value="homeodomain"/>
    <property type="match status" value="1"/>
</dbReference>
<dbReference type="FunFam" id="1.10.10.60:FF:000029">
    <property type="entry name" value="Homeobox protein Hox-D4"/>
    <property type="match status" value="1"/>
</dbReference>
<dbReference type="Gene3D" id="1.10.10.60">
    <property type="entry name" value="Homeodomain-like"/>
    <property type="match status" value="1"/>
</dbReference>
<dbReference type="InterPro" id="IPR050609">
    <property type="entry name" value="Antp_homeobox_Deformed_sf"/>
</dbReference>
<dbReference type="InterPro" id="IPR001356">
    <property type="entry name" value="HD"/>
</dbReference>
<dbReference type="InterPro" id="IPR020479">
    <property type="entry name" value="HD_metazoa"/>
</dbReference>
<dbReference type="InterPro" id="IPR017995">
    <property type="entry name" value="Homeobox_antennapedia"/>
</dbReference>
<dbReference type="InterPro" id="IPR001827">
    <property type="entry name" value="Homeobox_Antennapedia_CS"/>
</dbReference>
<dbReference type="InterPro" id="IPR017970">
    <property type="entry name" value="Homeobox_CS"/>
</dbReference>
<dbReference type="InterPro" id="IPR009057">
    <property type="entry name" value="Homeodomain-like_sf"/>
</dbReference>
<dbReference type="PANTHER" id="PTHR45771:SF2">
    <property type="entry name" value="HOMEOBOX PROTEIN HOX-A4"/>
    <property type="match status" value="1"/>
</dbReference>
<dbReference type="PANTHER" id="PTHR45771">
    <property type="entry name" value="HOMEOTIC PROTEIN DEFORMED"/>
    <property type="match status" value="1"/>
</dbReference>
<dbReference type="Pfam" id="PF00046">
    <property type="entry name" value="Homeodomain"/>
    <property type="match status" value="1"/>
</dbReference>
<dbReference type="PRINTS" id="PR00025">
    <property type="entry name" value="ANTENNAPEDIA"/>
</dbReference>
<dbReference type="PRINTS" id="PR00024">
    <property type="entry name" value="HOMEOBOX"/>
</dbReference>
<dbReference type="SMART" id="SM00389">
    <property type="entry name" value="HOX"/>
    <property type="match status" value="1"/>
</dbReference>
<dbReference type="SUPFAM" id="SSF46689">
    <property type="entry name" value="Homeodomain-like"/>
    <property type="match status" value="1"/>
</dbReference>
<dbReference type="PROSITE" id="PS00032">
    <property type="entry name" value="ANTENNAPEDIA"/>
    <property type="match status" value="1"/>
</dbReference>
<dbReference type="PROSITE" id="PS00027">
    <property type="entry name" value="HOMEOBOX_1"/>
    <property type="match status" value="1"/>
</dbReference>
<dbReference type="PROSITE" id="PS50071">
    <property type="entry name" value="HOMEOBOX_2"/>
    <property type="match status" value="1"/>
</dbReference>
<name>HXA4A_DANRE</name>
<reference key="1">
    <citation type="journal article" date="1998" name="Science">
        <title>Zebrafish hox clusters and vertebrate genome evolution.</title>
        <authorList>
            <person name="Amores A."/>
            <person name="Force A."/>
            <person name="Yan Y.-L."/>
            <person name="Joly L."/>
            <person name="Amemiya C."/>
            <person name="Fritz A."/>
            <person name="Ho R.K."/>
            <person name="Langeland J."/>
            <person name="Prince V.E."/>
            <person name="Wang Y.-L."/>
            <person name="Westerfield M."/>
            <person name="Ekker M."/>
            <person name="Postlethwait J.H."/>
        </authorList>
    </citation>
    <scope>NUCLEOTIDE SEQUENCE [GENOMIC DNA]</scope>
</reference>
<reference key="2">
    <citation type="journal article" date="2013" name="Nature">
        <title>The zebrafish reference genome sequence and its relationship to the human genome.</title>
        <authorList>
            <person name="Howe K."/>
            <person name="Clark M.D."/>
            <person name="Torroja C.F."/>
            <person name="Torrance J."/>
            <person name="Berthelot C."/>
            <person name="Muffato M."/>
            <person name="Collins J.E."/>
            <person name="Humphray S."/>
            <person name="McLaren K."/>
            <person name="Matthews L."/>
            <person name="McLaren S."/>
            <person name="Sealy I."/>
            <person name="Caccamo M."/>
            <person name="Churcher C."/>
            <person name="Scott C."/>
            <person name="Barrett J.C."/>
            <person name="Koch R."/>
            <person name="Rauch G.J."/>
            <person name="White S."/>
            <person name="Chow W."/>
            <person name="Kilian B."/>
            <person name="Quintais L.T."/>
            <person name="Guerra-Assuncao J.A."/>
            <person name="Zhou Y."/>
            <person name="Gu Y."/>
            <person name="Yen J."/>
            <person name="Vogel J.H."/>
            <person name="Eyre T."/>
            <person name="Redmond S."/>
            <person name="Banerjee R."/>
            <person name="Chi J."/>
            <person name="Fu B."/>
            <person name="Langley E."/>
            <person name="Maguire S.F."/>
            <person name="Laird G.K."/>
            <person name="Lloyd D."/>
            <person name="Kenyon E."/>
            <person name="Donaldson S."/>
            <person name="Sehra H."/>
            <person name="Almeida-King J."/>
            <person name="Loveland J."/>
            <person name="Trevanion S."/>
            <person name="Jones M."/>
            <person name="Quail M."/>
            <person name="Willey D."/>
            <person name="Hunt A."/>
            <person name="Burton J."/>
            <person name="Sims S."/>
            <person name="McLay K."/>
            <person name="Plumb B."/>
            <person name="Davis J."/>
            <person name="Clee C."/>
            <person name="Oliver K."/>
            <person name="Clark R."/>
            <person name="Riddle C."/>
            <person name="Elliot D."/>
            <person name="Threadgold G."/>
            <person name="Harden G."/>
            <person name="Ware D."/>
            <person name="Begum S."/>
            <person name="Mortimore B."/>
            <person name="Kerry G."/>
            <person name="Heath P."/>
            <person name="Phillimore B."/>
            <person name="Tracey A."/>
            <person name="Corby N."/>
            <person name="Dunn M."/>
            <person name="Johnson C."/>
            <person name="Wood J."/>
            <person name="Clark S."/>
            <person name="Pelan S."/>
            <person name="Griffiths G."/>
            <person name="Smith M."/>
            <person name="Glithero R."/>
            <person name="Howden P."/>
            <person name="Barker N."/>
            <person name="Lloyd C."/>
            <person name="Stevens C."/>
            <person name="Harley J."/>
            <person name="Holt K."/>
            <person name="Panagiotidis G."/>
            <person name="Lovell J."/>
            <person name="Beasley H."/>
            <person name="Henderson C."/>
            <person name="Gordon D."/>
            <person name="Auger K."/>
            <person name="Wright D."/>
            <person name="Collins J."/>
            <person name="Raisen C."/>
            <person name="Dyer L."/>
            <person name="Leung K."/>
            <person name="Robertson L."/>
            <person name="Ambridge K."/>
            <person name="Leongamornlert D."/>
            <person name="McGuire S."/>
            <person name="Gilderthorp R."/>
            <person name="Griffiths C."/>
            <person name="Manthravadi D."/>
            <person name="Nichol S."/>
            <person name="Barker G."/>
            <person name="Whitehead S."/>
            <person name="Kay M."/>
            <person name="Brown J."/>
            <person name="Murnane C."/>
            <person name="Gray E."/>
            <person name="Humphries M."/>
            <person name="Sycamore N."/>
            <person name="Barker D."/>
            <person name="Saunders D."/>
            <person name="Wallis J."/>
            <person name="Babbage A."/>
            <person name="Hammond S."/>
            <person name="Mashreghi-Mohammadi M."/>
            <person name="Barr L."/>
            <person name="Martin S."/>
            <person name="Wray P."/>
            <person name="Ellington A."/>
            <person name="Matthews N."/>
            <person name="Ellwood M."/>
            <person name="Woodmansey R."/>
            <person name="Clark G."/>
            <person name="Cooper J."/>
            <person name="Tromans A."/>
            <person name="Grafham D."/>
            <person name="Skuce C."/>
            <person name="Pandian R."/>
            <person name="Andrews R."/>
            <person name="Harrison E."/>
            <person name="Kimberley A."/>
            <person name="Garnett J."/>
            <person name="Fosker N."/>
            <person name="Hall R."/>
            <person name="Garner P."/>
            <person name="Kelly D."/>
            <person name="Bird C."/>
            <person name="Palmer S."/>
            <person name="Gehring I."/>
            <person name="Berger A."/>
            <person name="Dooley C.M."/>
            <person name="Ersan-Urun Z."/>
            <person name="Eser C."/>
            <person name="Geiger H."/>
            <person name="Geisler M."/>
            <person name="Karotki L."/>
            <person name="Kirn A."/>
            <person name="Konantz J."/>
            <person name="Konantz M."/>
            <person name="Oberlander M."/>
            <person name="Rudolph-Geiger S."/>
            <person name="Teucke M."/>
            <person name="Lanz C."/>
            <person name="Raddatz G."/>
            <person name="Osoegawa K."/>
            <person name="Zhu B."/>
            <person name="Rapp A."/>
            <person name="Widaa S."/>
            <person name="Langford C."/>
            <person name="Yang F."/>
            <person name="Schuster S.C."/>
            <person name="Carter N.P."/>
            <person name="Harrow J."/>
            <person name="Ning Z."/>
            <person name="Herrero J."/>
            <person name="Searle S.M."/>
            <person name="Enright A."/>
            <person name="Geisler R."/>
            <person name="Plasterk R.H."/>
            <person name="Lee C."/>
            <person name="Westerfield M."/>
            <person name="de Jong P.J."/>
            <person name="Zon L.I."/>
            <person name="Postlethwait J.H."/>
            <person name="Nusslein-Volhard C."/>
            <person name="Hubbard T.J."/>
            <person name="Roest Crollius H."/>
            <person name="Rogers J."/>
            <person name="Stemple D.L."/>
        </authorList>
    </citation>
    <scope>NUCLEOTIDE SEQUENCE [LARGE SCALE GENOMIC DNA]</scope>
    <source>
        <strain>Tuebingen</strain>
    </source>
</reference>
<reference key="3">
    <citation type="submission" date="2006-08" db="EMBL/GenBank/DDBJ databases">
        <authorList>
            <consortium name="NIH - Zebrafish Gene Collection (ZGC) project"/>
        </authorList>
    </citation>
    <scope>NUCLEOTIDE SEQUENCE [LARGE SCALE MRNA]</scope>
</reference>
<reference key="4">
    <citation type="journal article" date="2005" name="Evol. Dev.">
        <title>Genomic annotation and transcriptome analysis of the zebrafish (Danio rerio) hox complex with description of a novel member, hoxb13a.</title>
        <authorList>
            <person name="Corredor-Adamez M."/>
            <person name="Welten M.C.M."/>
            <person name="Spaink H.P."/>
            <person name="Jeffery J.E."/>
            <person name="Schoon R.T."/>
            <person name="de Bakker M.A.G."/>
            <person name="Bagowski C.P."/>
            <person name="Meijer A.H."/>
            <person name="Verbeek F.J."/>
            <person name="Richardson M.K."/>
        </authorList>
    </citation>
    <scope>NUCLEOTIDE SEQUENCE [MRNA] OF 68-148</scope>
    <source>
        <strain>Tuebingen</strain>
    </source>
</reference>
<reference key="5">
    <citation type="journal article" date="1991" name="Nucleic Acids Res.">
        <title>A new antennepedia-class gene from the zebrafish.</title>
        <authorList>
            <person name="Runstadler J.A."/>
            <person name="Kocher T.D."/>
        </authorList>
    </citation>
    <scope>NUCLEOTIDE SEQUENCE [GENOMIC DNA] OF 147-201</scope>
</reference>
<reference key="6">
    <citation type="journal article" date="1998" name="Development">
        <title>Zebrafish hox genes: expression in the hindbrain region of wild-type and mutants of the segmentation gene, valentino.</title>
        <authorList>
            <person name="Prince V.E."/>
            <person name="Moens C.B."/>
            <person name="Kimmel C.B."/>
            <person name="Ho R.K."/>
        </authorList>
    </citation>
    <scope>NUCLEOTIDE SEQUENCE [MRNA] OF 157-245</scope>
    <scope>DEVELOPMENTAL STAGE</scope>
    <source>
        <tissue>Embryo</tissue>
    </source>
</reference>
<reference key="7">
    <citation type="journal article" date="1998" name="Development">
        <title>Zebrafish hox genes: genomic organization and modified colinear expression patterns in the trunk.</title>
        <authorList>
            <person name="Prince V.E."/>
            <person name="Joly L."/>
            <person name="Ekker M."/>
            <person name="Ho R.K."/>
        </authorList>
    </citation>
    <scope>DEVELOPMENTAL STAGE</scope>
</reference>
<feature type="chain" id="PRO_0000200053" description="Homeobox protein Hox-A4a">
    <location>
        <begin position="1"/>
        <end position="245"/>
    </location>
</feature>
<feature type="DNA-binding region" description="Homeobox" evidence="2">
    <location>
        <begin position="147"/>
        <end position="206"/>
    </location>
</feature>
<feature type="region of interest" description="Disordered" evidence="3">
    <location>
        <begin position="34"/>
        <end position="99"/>
    </location>
</feature>
<feature type="region of interest" description="Disordered" evidence="3">
    <location>
        <begin position="205"/>
        <end position="245"/>
    </location>
</feature>
<feature type="short sequence motif" description="Antp-type hexapeptide">
    <location>
        <begin position="126"/>
        <end position="131"/>
    </location>
</feature>
<feature type="compositionally biased region" description="Basic and acidic residues" evidence="3">
    <location>
        <begin position="35"/>
        <end position="51"/>
    </location>
</feature>
<feature type="compositionally biased region" description="Polar residues" evidence="3">
    <location>
        <begin position="53"/>
        <end position="73"/>
    </location>
</feature>
<feature type="compositionally biased region" description="Polar residues" evidence="3">
    <location>
        <begin position="82"/>
        <end position="99"/>
    </location>
</feature>
<feature type="compositionally biased region" description="Polar residues" evidence="3">
    <location>
        <begin position="212"/>
        <end position="221"/>
    </location>
</feature>
<feature type="compositionally biased region" description="Low complexity" evidence="3">
    <location>
        <begin position="230"/>
        <end position="245"/>
    </location>
</feature>
<feature type="sequence conflict" description="In Ref. 1; AAD15939." evidence="6" ref="1">
    <original>RSSSSAPSNHHVKTDATQQ</original>
    <variation>APRALHPPTITWKRTPLS</variation>
    <location>
        <begin position="214"/>
        <end position="232"/>
    </location>
</feature>
<feature type="sequence conflict" description="In Ref. 6; CAA74285." evidence="6" ref="6">
    <original>K</original>
    <variation>E</variation>
    <location>
        <position position="226"/>
    </location>
</feature>
<proteinExistence type="evidence at transcript level"/>
<gene>
    <name type="primary">hoxa4a</name>
    <name type="synonym">hoxx4</name>
    <name type="synonym">zf26</name>
</gene>
<accession>Q9PWL5</accession>
<accession>O42371</accession>
<accession>Q05784</accession>
<accession>Q0P3T8</accession>
<accession>Q1L970</accession>
<accession>Q4PRB0</accession>
<comment type="function">
    <text evidence="1">Sequence-specific transcription factor which is part of a developmental regulatory system that provides cells with specific positional identities on the anterior-posterior axis.</text>
</comment>
<comment type="subcellular location">
    <subcellularLocation>
        <location evidence="2">Nucleus</location>
    </subcellularLocation>
</comment>
<comment type="developmental stage">
    <text evidence="4 5">First expressed at the 1-somite stage. At the 10-somite stage, weakly expressed in the paraxial mesoderm with an anterior expression limit at somite 1. At the 20-somite stage, expressed within the developing CNS with an anterior expression limit adjacent to the rhombomere 7/8 boundary.</text>
</comment>
<comment type="similarity">
    <text evidence="6">Belongs to the Antp homeobox family. Deformed subfamily.</text>
</comment>
<protein>
    <recommendedName>
        <fullName>Homeobox protein Hox-A4a</fullName>
    </recommendedName>
    <alternativeName>
        <fullName>Homeobox protein Zf-26</fullName>
    </alternativeName>
    <alternativeName>
        <fullName>Hoxx4</fullName>
    </alternativeName>
</protein>
<sequence length="245" mass="28288">MIMSSYLINSNYIEPSFPPCEEYHQNGYMPVSSDYYERPKDPGFPHHEEASYPRSNYQEQSYDYGNVSTNDLNDFSDRHHAQPQSVSQNHGPRLTTESCVGSDGNKDCSLVSDALPGSQKSKEPVVYPWMKKVHVNTVTASYSGGVPKRSRTAYTRQQALELEKEFHFNRYLTRRRRVEIAHTMCLSERQVKIWFQNRRMKWKKDHKLPNTKIRSSSSAPSNHHVKTDATQQQQTLLPTPCSSNL</sequence>